<dbReference type="EMBL" id="AJ519812">
    <property type="protein sequence ID" value="CAD58596.1"/>
    <property type="molecule type" value="mRNA"/>
</dbReference>
<dbReference type="EMBL" id="AF013294">
    <property type="protein sequence ID" value="AAB62853.1"/>
    <property type="molecule type" value="Genomic_DNA"/>
</dbReference>
<dbReference type="EMBL" id="AL161472">
    <property type="protein sequence ID" value="CAB80896.1"/>
    <property type="molecule type" value="Genomic_DNA"/>
</dbReference>
<dbReference type="EMBL" id="CP002687">
    <property type="protein sequence ID" value="AEE81947.1"/>
    <property type="molecule type" value="Genomic_DNA"/>
</dbReference>
<dbReference type="PIR" id="T01559">
    <property type="entry name" value="T01559"/>
</dbReference>
<dbReference type="RefSeq" id="NP_567195.1">
    <property type="nucleotide sequence ID" value="NM_116313.3"/>
</dbReference>
<dbReference type="SMR" id="O23090"/>
<dbReference type="BioGRID" id="13281">
    <property type="interactions" value="31"/>
</dbReference>
<dbReference type="FunCoup" id="O23090">
    <property type="interactions" value="1"/>
</dbReference>
<dbReference type="IntAct" id="O23090">
    <property type="interactions" value="22"/>
</dbReference>
<dbReference type="STRING" id="3702.O23090"/>
<dbReference type="PaxDb" id="3702-AT4G00870.1"/>
<dbReference type="ProteomicsDB" id="240873"/>
<dbReference type="EnsemblPlants" id="AT4G00870.1">
    <property type="protein sequence ID" value="AT4G00870.1"/>
    <property type="gene ID" value="AT4G00870"/>
</dbReference>
<dbReference type="GeneID" id="827990"/>
<dbReference type="Gramene" id="AT4G00870.1">
    <property type="protein sequence ID" value="AT4G00870.1"/>
    <property type="gene ID" value="AT4G00870"/>
</dbReference>
<dbReference type="KEGG" id="ath:AT4G00870"/>
<dbReference type="Araport" id="AT4G00870"/>
<dbReference type="TAIR" id="AT4G00870">
    <property type="gene designation" value="BHLH14"/>
</dbReference>
<dbReference type="eggNOG" id="ENOG502QS6Z">
    <property type="taxonomic scope" value="Eukaryota"/>
</dbReference>
<dbReference type="HOGENOM" id="CLU_021132_0_0_1"/>
<dbReference type="InParanoid" id="O23090"/>
<dbReference type="OMA" id="DSIRENW"/>
<dbReference type="PhylomeDB" id="O23090"/>
<dbReference type="PRO" id="PR:O23090"/>
<dbReference type="Proteomes" id="UP000006548">
    <property type="component" value="Chromosome 4"/>
</dbReference>
<dbReference type="ExpressionAtlas" id="O23090">
    <property type="expression patterns" value="baseline and differential"/>
</dbReference>
<dbReference type="GO" id="GO:0005737">
    <property type="term" value="C:cytoplasm"/>
    <property type="evidence" value="ECO:0000314"/>
    <property type="project" value="TAIR"/>
</dbReference>
<dbReference type="GO" id="GO:0005634">
    <property type="term" value="C:nucleus"/>
    <property type="evidence" value="ECO:0000314"/>
    <property type="project" value="TAIR"/>
</dbReference>
<dbReference type="GO" id="GO:0003677">
    <property type="term" value="F:DNA binding"/>
    <property type="evidence" value="ECO:0007669"/>
    <property type="project" value="UniProtKB-KW"/>
</dbReference>
<dbReference type="GO" id="GO:0003700">
    <property type="term" value="F:DNA-binding transcription factor activity"/>
    <property type="evidence" value="ECO:0000250"/>
    <property type="project" value="TAIR"/>
</dbReference>
<dbReference type="GO" id="GO:0046983">
    <property type="term" value="F:protein dimerization activity"/>
    <property type="evidence" value="ECO:0007669"/>
    <property type="project" value="InterPro"/>
</dbReference>
<dbReference type="GO" id="GO:0010629">
    <property type="term" value="P:negative regulation of gene expression"/>
    <property type="evidence" value="ECO:0000316"/>
    <property type="project" value="TAIR"/>
</dbReference>
<dbReference type="GO" id="GO:0006355">
    <property type="term" value="P:regulation of DNA-templated transcription"/>
    <property type="evidence" value="ECO:0000304"/>
    <property type="project" value="TAIR"/>
</dbReference>
<dbReference type="CDD" id="cd11449">
    <property type="entry name" value="bHLH_AtAIB_like"/>
    <property type="match status" value="1"/>
</dbReference>
<dbReference type="Gene3D" id="4.10.280.10">
    <property type="entry name" value="Helix-loop-helix DNA-binding domain"/>
    <property type="match status" value="1"/>
</dbReference>
<dbReference type="InterPro" id="IPR045084">
    <property type="entry name" value="AIB/MYC-like"/>
</dbReference>
<dbReference type="InterPro" id="IPR011598">
    <property type="entry name" value="bHLH_dom"/>
</dbReference>
<dbReference type="InterPro" id="IPR036638">
    <property type="entry name" value="HLH_DNA-bd_sf"/>
</dbReference>
<dbReference type="InterPro" id="IPR025610">
    <property type="entry name" value="MYC/MYB_N"/>
</dbReference>
<dbReference type="PANTHER" id="PTHR11514">
    <property type="entry name" value="MYC"/>
    <property type="match status" value="1"/>
</dbReference>
<dbReference type="PANTHER" id="PTHR11514:SF40">
    <property type="entry name" value="TRANSCRIPTION FACTOR BHLH14"/>
    <property type="match status" value="1"/>
</dbReference>
<dbReference type="Pfam" id="PF14215">
    <property type="entry name" value="bHLH-MYC_N"/>
    <property type="match status" value="1"/>
</dbReference>
<dbReference type="Pfam" id="PF00010">
    <property type="entry name" value="HLH"/>
    <property type="match status" value="1"/>
</dbReference>
<dbReference type="SMART" id="SM00353">
    <property type="entry name" value="HLH"/>
    <property type="match status" value="1"/>
</dbReference>
<dbReference type="SUPFAM" id="SSF47459">
    <property type="entry name" value="HLH, helix-loop-helix DNA-binding domain"/>
    <property type="match status" value="1"/>
</dbReference>
<dbReference type="PROSITE" id="PS50888">
    <property type="entry name" value="BHLH"/>
    <property type="match status" value="1"/>
</dbReference>
<organism>
    <name type="scientific">Arabidopsis thaliana</name>
    <name type="common">Mouse-ear cress</name>
    <dbReference type="NCBI Taxonomy" id="3702"/>
    <lineage>
        <taxon>Eukaryota</taxon>
        <taxon>Viridiplantae</taxon>
        <taxon>Streptophyta</taxon>
        <taxon>Embryophyta</taxon>
        <taxon>Tracheophyta</taxon>
        <taxon>Spermatophyta</taxon>
        <taxon>Magnoliopsida</taxon>
        <taxon>eudicotyledons</taxon>
        <taxon>Gunneridae</taxon>
        <taxon>Pentapetalae</taxon>
        <taxon>rosids</taxon>
        <taxon>malvids</taxon>
        <taxon>Brassicales</taxon>
        <taxon>Brassicaceae</taxon>
        <taxon>Camelineae</taxon>
        <taxon>Arabidopsis</taxon>
    </lineage>
</organism>
<name>BH014_ARATH</name>
<keyword id="KW-0238">DNA-binding</keyword>
<keyword id="KW-0539">Nucleus</keyword>
<keyword id="KW-1185">Reference proteome</keyword>
<keyword id="KW-0804">Transcription</keyword>
<keyword id="KW-0805">Transcription regulation</keyword>
<protein>
    <recommendedName>
        <fullName>Transcription factor bHLH14</fullName>
    </recommendedName>
    <alternativeName>
        <fullName>Basic helix-loop-helix protein 14</fullName>
        <shortName>AtbHLH14</shortName>
        <shortName>bHLH 14</shortName>
    </alternativeName>
    <alternativeName>
        <fullName>Transcription factor EN 33</fullName>
    </alternativeName>
    <alternativeName>
        <fullName>bHLH transcription factor bHLH014</fullName>
    </alternativeName>
</protein>
<proteinExistence type="evidence at protein level"/>
<sequence length="423" mass="47733">MYNLTFSPSLSSSLLSFTQQTPAAIVSSSPPDLVLQQKLRFVVETSPDRWAYVIFWQKMFDDQSDRSYLVWVDGHFCGNKNNNSQENYTTNSIECELMMDGGDDLELFYAASFYGEDRSPRKEVSDESLVWLTGPDELRFSNYERAKEAGFHGVHTLVSIPINNGIIELGSSESIIQNRNFINRVKSIFGSGKTTKHTNQTGSYPKPAVSDHSKSGNQQFGSERKRRRKLETTRVAAATKEKHHPAVLSHVEAEKQRREKLNHRFYALRAIVPKVSRMDKASLLSDAVSYIESLKSKIDDLETEIKKMKMTETDKLDNSSSNTSPSSVEYQVNQKPSKSNRGSDLEVQVKIVGEEAIIRVQTENVNHPTSALMSALMEMDCRVQHANASRLSQVMVQDVVVLVPEGLRSEDRLRTTLVRTLSL</sequence>
<gene>
    <name type="primary">BHLH14</name>
    <name type="synonym">EN33</name>
    <name type="ordered locus">At4g00870</name>
    <name type="ORF">A_TM018A10.7</name>
    <name type="ORF">T18A10.17</name>
</gene>
<feature type="chain" id="PRO_0000358731" description="Transcription factor bHLH14">
    <location>
        <begin position="1"/>
        <end position="423"/>
    </location>
</feature>
<feature type="domain" description="bHLH" evidence="1">
    <location>
        <begin position="245"/>
        <end position="294"/>
    </location>
</feature>
<feature type="region of interest" description="Disordered" evidence="2">
    <location>
        <begin position="192"/>
        <end position="243"/>
    </location>
</feature>
<feature type="region of interest" description="Disordered" evidence="2">
    <location>
        <begin position="312"/>
        <end position="343"/>
    </location>
</feature>
<feature type="compositionally biased region" description="Low complexity" evidence="2">
    <location>
        <begin position="318"/>
        <end position="327"/>
    </location>
</feature>
<feature type="compositionally biased region" description="Polar residues" evidence="2">
    <location>
        <begin position="328"/>
        <end position="342"/>
    </location>
</feature>
<comment type="subunit">
    <text evidence="3">Homodimer.</text>
</comment>
<comment type="interaction">
    <interactant intactId="EBI-15193049">
        <id>O23090</id>
    </interactant>
    <interactant intactId="EBI-25511057">
        <id>A0A384L363</id>
        <label>At3g18240</label>
    </interactant>
    <organismsDiffer>false</organismsDiffer>
    <experiments>3</experiments>
</comment>
<comment type="interaction">
    <interactant intactId="EBI-15193049">
        <id>O23090</id>
    </interactant>
    <interactant intactId="EBI-15191981">
        <id>Q9LV59</id>
        <label>At3g24490</label>
    </interactant>
    <organismsDiffer>false</organismsDiffer>
    <experiments>3</experiments>
</comment>
<comment type="interaction">
    <interactant intactId="EBI-15193049">
        <id>O23090</id>
    </interactant>
    <interactant intactId="EBI-4475455">
        <id>Q9FG01</id>
        <label>ATO</label>
    </interactant>
    <organismsDiffer>false</organismsDiffer>
    <experiments>3</experiments>
</comment>
<comment type="interaction">
    <interactant intactId="EBI-15193049">
        <id>O23090</id>
    </interactant>
    <interactant intactId="EBI-4448718">
        <id>Q9FMY5</id>
        <label>U2AF35B</label>
    </interactant>
    <organismsDiffer>false</organismsDiffer>
    <experiments>3</experiments>
</comment>
<comment type="subcellular location">
    <subcellularLocation>
        <location evidence="1">Nucleus</location>
    </subcellularLocation>
</comment>
<accession>O23090</accession>
<reference key="1">
    <citation type="journal article" date="2003" name="Mol. Biol. Evol.">
        <title>The basic helix-loop-helix transcription factor family in plants: a genome-wide study of protein structure and functional diversity.</title>
        <authorList>
            <person name="Heim M.A."/>
            <person name="Jakoby M."/>
            <person name="Werber M."/>
            <person name="Martin C."/>
            <person name="Weisshaar B."/>
            <person name="Bailey P.C."/>
        </authorList>
    </citation>
    <scope>NUCLEOTIDE SEQUENCE [MRNA]</scope>
    <scope>GENE FAMILY</scope>
    <scope>NOMENCLATURE</scope>
    <source>
        <strain>cv. Columbia</strain>
    </source>
</reference>
<reference key="2">
    <citation type="journal article" date="1999" name="Nature">
        <title>Sequence and analysis of chromosome 4 of the plant Arabidopsis thaliana.</title>
        <authorList>
            <person name="Mayer K.F.X."/>
            <person name="Schueller C."/>
            <person name="Wambutt R."/>
            <person name="Murphy G."/>
            <person name="Volckaert G."/>
            <person name="Pohl T."/>
            <person name="Duesterhoeft A."/>
            <person name="Stiekema W."/>
            <person name="Entian K.-D."/>
            <person name="Terryn N."/>
            <person name="Harris B."/>
            <person name="Ansorge W."/>
            <person name="Brandt P."/>
            <person name="Grivell L.A."/>
            <person name="Rieger M."/>
            <person name="Weichselgartner M."/>
            <person name="de Simone V."/>
            <person name="Obermaier B."/>
            <person name="Mache R."/>
            <person name="Mueller M."/>
            <person name="Kreis M."/>
            <person name="Delseny M."/>
            <person name="Puigdomenech P."/>
            <person name="Watson M."/>
            <person name="Schmidtheini T."/>
            <person name="Reichert B."/>
            <person name="Portetelle D."/>
            <person name="Perez-Alonso M."/>
            <person name="Boutry M."/>
            <person name="Bancroft I."/>
            <person name="Vos P."/>
            <person name="Hoheisel J."/>
            <person name="Zimmermann W."/>
            <person name="Wedler H."/>
            <person name="Ridley P."/>
            <person name="Langham S.-A."/>
            <person name="McCullagh B."/>
            <person name="Bilham L."/>
            <person name="Robben J."/>
            <person name="van der Schueren J."/>
            <person name="Grymonprez B."/>
            <person name="Chuang Y.-J."/>
            <person name="Vandenbussche F."/>
            <person name="Braeken M."/>
            <person name="Weltjens I."/>
            <person name="Voet M."/>
            <person name="Bastiaens I."/>
            <person name="Aert R."/>
            <person name="Defoor E."/>
            <person name="Weitzenegger T."/>
            <person name="Bothe G."/>
            <person name="Ramsperger U."/>
            <person name="Hilbert H."/>
            <person name="Braun M."/>
            <person name="Holzer E."/>
            <person name="Brandt A."/>
            <person name="Peters S."/>
            <person name="van Staveren M."/>
            <person name="Dirkse W."/>
            <person name="Mooijman P."/>
            <person name="Klein Lankhorst R."/>
            <person name="Rose M."/>
            <person name="Hauf J."/>
            <person name="Koetter P."/>
            <person name="Berneiser S."/>
            <person name="Hempel S."/>
            <person name="Feldpausch M."/>
            <person name="Lamberth S."/>
            <person name="Van den Daele H."/>
            <person name="De Keyser A."/>
            <person name="Buysshaert C."/>
            <person name="Gielen J."/>
            <person name="Villarroel R."/>
            <person name="De Clercq R."/>
            <person name="van Montagu M."/>
            <person name="Rogers J."/>
            <person name="Cronin A."/>
            <person name="Quail M.A."/>
            <person name="Bray-Allen S."/>
            <person name="Clark L."/>
            <person name="Doggett J."/>
            <person name="Hall S."/>
            <person name="Kay M."/>
            <person name="Lennard N."/>
            <person name="McLay K."/>
            <person name="Mayes R."/>
            <person name="Pettett A."/>
            <person name="Rajandream M.A."/>
            <person name="Lyne M."/>
            <person name="Benes V."/>
            <person name="Rechmann S."/>
            <person name="Borkova D."/>
            <person name="Bloecker H."/>
            <person name="Scharfe M."/>
            <person name="Grimm M."/>
            <person name="Loehnert T.-H."/>
            <person name="Dose S."/>
            <person name="de Haan M."/>
            <person name="Maarse A.C."/>
            <person name="Schaefer M."/>
            <person name="Mueller-Auer S."/>
            <person name="Gabel C."/>
            <person name="Fuchs M."/>
            <person name="Fartmann B."/>
            <person name="Granderath K."/>
            <person name="Dauner D."/>
            <person name="Herzl A."/>
            <person name="Neumann S."/>
            <person name="Argiriou A."/>
            <person name="Vitale D."/>
            <person name="Liguori R."/>
            <person name="Piravandi E."/>
            <person name="Massenet O."/>
            <person name="Quigley F."/>
            <person name="Clabauld G."/>
            <person name="Muendlein A."/>
            <person name="Felber R."/>
            <person name="Schnabl S."/>
            <person name="Hiller R."/>
            <person name="Schmidt W."/>
            <person name="Lecharny A."/>
            <person name="Aubourg S."/>
            <person name="Chefdor F."/>
            <person name="Cooke R."/>
            <person name="Berger C."/>
            <person name="Monfort A."/>
            <person name="Casacuberta E."/>
            <person name="Gibbons T."/>
            <person name="Weber N."/>
            <person name="Vandenbol M."/>
            <person name="Bargues M."/>
            <person name="Terol J."/>
            <person name="Torres A."/>
            <person name="Perez-Perez A."/>
            <person name="Purnelle B."/>
            <person name="Bent E."/>
            <person name="Johnson S."/>
            <person name="Tacon D."/>
            <person name="Jesse T."/>
            <person name="Heijnen L."/>
            <person name="Schwarz S."/>
            <person name="Scholler P."/>
            <person name="Heber S."/>
            <person name="Francs P."/>
            <person name="Bielke C."/>
            <person name="Frishman D."/>
            <person name="Haase D."/>
            <person name="Lemcke K."/>
            <person name="Mewes H.-W."/>
            <person name="Stocker S."/>
            <person name="Zaccaria P."/>
            <person name="Bevan M."/>
            <person name="Wilson R.K."/>
            <person name="de la Bastide M."/>
            <person name="Habermann K."/>
            <person name="Parnell L."/>
            <person name="Dedhia N."/>
            <person name="Gnoj L."/>
            <person name="Schutz K."/>
            <person name="Huang E."/>
            <person name="Spiegel L."/>
            <person name="Sekhon M."/>
            <person name="Murray J."/>
            <person name="Sheet P."/>
            <person name="Cordes M."/>
            <person name="Abu-Threideh J."/>
            <person name="Stoneking T."/>
            <person name="Kalicki J."/>
            <person name="Graves T."/>
            <person name="Harmon G."/>
            <person name="Edwards J."/>
            <person name="Latreille P."/>
            <person name="Courtney L."/>
            <person name="Cloud J."/>
            <person name="Abbott A."/>
            <person name="Scott K."/>
            <person name="Johnson D."/>
            <person name="Minx P."/>
            <person name="Bentley D."/>
            <person name="Fulton B."/>
            <person name="Miller N."/>
            <person name="Greco T."/>
            <person name="Kemp K."/>
            <person name="Kramer J."/>
            <person name="Fulton L."/>
            <person name="Mardis E."/>
            <person name="Dante M."/>
            <person name="Pepin K."/>
            <person name="Hillier L.W."/>
            <person name="Nelson J."/>
            <person name="Spieth J."/>
            <person name="Ryan E."/>
            <person name="Andrews S."/>
            <person name="Geisel C."/>
            <person name="Layman D."/>
            <person name="Du H."/>
            <person name="Ali J."/>
            <person name="Berghoff A."/>
            <person name="Jones K."/>
            <person name="Drone K."/>
            <person name="Cotton M."/>
            <person name="Joshu C."/>
            <person name="Antonoiu B."/>
            <person name="Zidanic M."/>
            <person name="Strong C."/>
            <person name="Sun H."/>
            <person name="Lamar B."/>
            <person name="Yordan C."/>
            <person name="Ma P."/>
            <person name="Zhong J."/>
            <person name="Preston R."/>
            <person name="Vil D."/>
            <person name="Shekher M."/>
            <person name="Matero A."/>
            <person name="Shah R."/>
            <person name="Swaby I.K."/>
            <person name="O'Shaughnessy A."/>
            <person name="Rodriguez M."/>
            <person name="Hoffman J."/>
            <person name="Till S."/>
            <person name="Granat S."/>
            <person name="Shohdy N."/>
            <person name="Hasegawa A."/>
            <person name="Hameed A."/>
            <person name="Lodhi M."/>
            <person name="Johnson A."/>
            <person name="Chen E."/>
            <person name="Marra M.A."/>
            <person name="Martienssen R."/>
            <person name="McCombie W.R."/>
        </authorList>
    </citation>
    <scope>NUCLEOTIDE SEQUENCE [LARGE SCALE GENOMIC DNA]</scope>
    <source>
        <strain>cv. Columbia</strain>
    </source>
</reference>
<reference key="3">
    <citation type="journal article" date="2017" name="Plant J.">
        <title>Araport11: a complete reannotation of the Arabidopsis thaliana reference genome.</title>
        <authorList>
            <person name="Cheng C.Y."/>
            <person name="Krishnakumar V."/>
            <person name="Chan A.P."/>
            <person name="Thibaud-Nissen F."/>
            <person name="Schobel S."/>
            <person name="Town C.D."/>
        </authorList>
    </citation>
    <scope>GENOME REANNOTATION</scope>
    <source>
        <strain>cv. Columbia</strain>
    </source>
</reference>
<reference key="4">
    <citation type="journal article" date="2003" name="Plant Cell">
        <title>The Arabidopsis basic/helix-loop-helix transcription factor family.</title>
        <authorList>
            <person name="Toledo-Ortiz G."/>
            <person name="Huq E."/>
            <person name="Quail P.H."/>
        </authorList>
    </citation>
    <scope>GENE FAMILY</scope>
</reference>
<reference key="5">
    <citation type="journal article" date="2003" name="Plant Cell">
        <title>Update on the basic helix-loop-helix transcription factor gene family in Arabidopsis thaliana.</title>
        <authorList>
            <person name="Bailey P.C."/>
            <person name="Martin C."/>
            <person name="Toledo-Ortiz G."/>
            <person name="Quail P.H."/>
            <person name="Huq E."/>
            <person name="Heim M.A."/>
            <person name="Jakoby M."/>
            <person name="Werber M."/>
            <person name="Weisshaar B."/>
        </authorList>
    </citation>
    <scope>GENE FAMILY</scope>
    <scope>NOMENCLATURE</scope>
</reference>
<evidence type="ECO:0000255" key="1">
    <source>
        <dbReference type="PROSITE-ProRule" id="PRU00981"/>
    </source>
</evidence>
<evidence type="ECO:0000256" key="2">
    <source>
        <dbReference type="SAM" id="MobiDB-lite"/>
    </source>
</evidence>
<evidence type="ECO:0000305" key="3"/>